<feature type="chain" id="PRO_0000234038" description="2-deoxy-scyllo-inosose synthase">
    <location>
        <begin position="1"/>
        <end position="384"/>
    </location>
</feature>
<feature type="active site" evidence="2">
    <location>
        <position position="142"/>
    </location>
</feature>
<feature type="active site" evidence="2">
    <location>
        <position position="244"/>
    </location>
</feature>
<feature type="binding site" evidence="2">
    <location>
        <position position="42"/>
    </location>
    <ligand>
        <name>NAD(+)</name>
        <dbReference type="ChEBI" id="CHEBI:57540"/>
    </ligand>
</feature>
<feature type="binding site" evidence="2">
    <location>
        <begin position="73"/>
        <end position="76"/>
    </location>
    <ligand>
        <name>NAD(+)</name>
        <dbReference type="ChEBI" id="CHEBI:57540"/>
    </ligand>
</feature>
<feature type="binding site" evidence="2">
    <location>
        <begin position="105"/>
        <end position="109"/>
    </location>
    <ligand>
        <name>NAD(+)</name>
        <dbReference type="ChEBI" id="CHEBI:57540"/>
    </ligand>
</feature>
<feature type="binding site" evidence="2">
    <location>
        <begin position="129"/>
        <end position="130"/>
    </location>
    <ligand>
        <name>NAD(+)</name>
        <dbReference type="ChEBI" id="CHEBI:57540"/>
    </ligand>
</feature>
<feature type="binding site" evidence="2">
    <location>
        <begin position="140"/>
        <end position="142"/>
    </location>
    <ligand>
        <name>NAD(+)</name>
        <dbReference type="ChEBI" id="CHEBI:57540"/>
    </ligand>
</feature>
<feature type="binding site" evidence="2">
    <location>
        <begin position="151"/>
        <end position="152"/>
    </location>
    <ligand>
        <name>NAD(+)</name>
        <dbReference type="ChEBI" id="CHEBI:57540"/>
    </ligand>
</feature>
<feature type="binding site" evidence="2">
    <location>
        <position position="184"/>
    </location>
    <ligand>
        <name>Co(2+)</name>
        <dbReference type="ChEBI" id="CHEBI:48828"/>
    </ligand>
</feature>
<feature type="binding site" evidence="2">
    <location>
        <position position="247"/>
    </location>
    <ligand>
        <name>Co(2+)</name>
        <dbReference type="ChEBI" id="CHEBI:48828"/>
    </ligand>
</feature>
<feature type="binding site" evidence="2">
    <location>
        <position position="263"/>
    </location>
    <ligand>
        <name>Co(2+)</name>
        <dbReference type="ChEBI" id="CHEBI:48828"/>
    </ligand>
</feature>
<keyword id="KW-0045">Antibiotic biosynthesis</keyword>
<keyword id="KW-0170">Cobalt</keyword>
<keyword id="KW-0456">Lyase</keyword>
<keyword id="KW-0479">Metal-binding</keyword>
<keyword id="KW-0520">NAD</keyword>
<protein>
    <recommendedName>
        <fullName>2-deoxy-scyllo-inosose synthase</fullName>
        <shortName>DOI synthase</shortName>
        <shortName>DOIS</shortName>
        <ecNumber>4.2.3.124</ecNumber>
    </recommendedName>
</protein>
<dbReference type="EC" id="4.2.3.124"/>
<dbReference type="EMBL" id="AJ748832">
    <property type="protein sequence ID" value="CAG38697.1"/>
    <property type="molecule type" value="Genomic_DNA"/>
</dbReference>
<dbReference type="SMR" id="Q2MF70"/>
<dbReference type="UniPathway" id="UPA00907">
    <property type="reaction ID" value="UER00921"/>
</dbReference>
<dbReference type="UniPathway" id="UPA00968"/>
<dbReference type="GO" id="GO:0003856">
    <property type="term" value="F:3-dehydroquinate synthase activity"/>
    <property type="evidence" value="ECO:0007669"/>
    <property type="project" value="TreeGrafter"/>
</dbReference>
<dbReference type="GO" id="GO:0046872">
    <property type="term" value="F:metal ion binding"/>
    <property type="evidence" value="ECO:0007669"/>
    <property type="project" value="UniProtKB-KW"/>
</dbReference>
<dbReference type="GO" id="GO:0017000">
    <property type="term" value="P:antibiotic biosynthetic process"/>
    <property type="evidence" value="ECO:0007669"/>
    <property type="project" value="UniProtKB-KW"/>
</dbReference>
<dbReference type="GO" id="GO:0009073">
    <property type="term" value="P:aromatic amino acid family biosynthetic process"/>
    <property type="evidence" value="ECO:0007669"/>
    <property type="project" value="InterPro"/>
</dbReference>
<dbReference type="CDD" id="cd08197">
    <property type="entry name" value="DOIS"/>
    <property type="match status" value="1"/>
</dbReference>
<dbReference type="Gene3D" id="3.40.50.1970">
    <property type="match status" value="1"/>
</dbReference>
<dbReference type="Gene3D" id="1.20.1090.10">
    <property type="entry name" value="Dehydroquinate synthase-like - alpha domain"/>
    <property type="match status" value="1"/>
</dbReference>
<dbReference type="InterPro" id="IPR050071">
    <property type="entry name" value="Dehydroquinate_synthase"/>
</dbReference>
<dbReference type="InterPro" id="IPR030963">
    <property type="entry name" value="DHQ_synth_fam"/>
</dbReference>
<dbReference type="InterPro" id="IPR030960">
    <property type="entry name" value="DHQS/DOIS_N"/>
</dbReference>
<dbReference type="InterPro" id="IPR056179">
    <property type="entry name" value="DHQS_C"/>
</dbReference>
<dbReference type="PANTHER" id="PTHR43622">
    <property type="entry name" value="3-DEHYDROQUINATE SYNTHASE"/>
    <property type="match status" value="1"/>
</dbReference>
<dbReference type="PANTHER" id="PTHR43622:SF1">
    <property type="entry name" value="3-DEHYDROQUINATE SYNTHASE"/>
    <property type="match status" value="1"/>
</dbReference>
<dbReference type="Pfam" id="PF01761">
    <property type="entry name" value="DHQ_synthase"/>
    <property type="match status" value="1"/>
</dbReference>
<dbReference type="Pfam" id="PF24621">
    <property type="entry name" value="DHQS_C"/>
    <property type="match status" value="1"/>
</dbReference>
<dbReference type="PIRSF" id="PIRSF001455">
    <property type="entry name" value="DHQ_synth"/>
    <property type="match status" value="1"/>
</dbReference>
<dbReference type="SUPFAM" id="SSF56796">
    <property type="entry name" value="Dehydroquinate synthase-like"/>
    <property type="match status" value="1"/>
</dbReference>
<comment type="function">
    <text evidence="1">Catalyzes the intramolecular carbocycle formation from D-glucose-6-phosphate to 2-deoxy-scyllo-inosose (DOI).</text>
</comment>
<comment type="catalytic activity">
    <reaction>
        <text>D-glucose 6-phosphate = 2-deoxy-L-scyllo-inosose + phosphate</text>
        <dbReference type="Rhea" id="RHEA:33071"/>
        <dbReference type="ChEBI" id="CHEBI:43474"/>
        <dbReference type="ChEBI" id="CHEBI:61548"/>
        <dbReference type="ChEBI" id="CHEBI:64796"/>
        <dbReference type="EC" id="4.2.3.124"/>
    </reaction>
</comment>
<comment type="cofactor">
    <cofactor evidence="2">
        <name>NAD(+)</name>
        <dbReference type="ChEBI" id="CHEBI:57540"/>
    </cofactor>
</comment>
<comment type="cofactor">
    <cofactor evidence="2">
        <name>Co(2+)</name>
        <dbReference type="ChEBI" id="CHEBI:48828"/>
    </cofactor>
    <text evidence="2">Binds 1 Co(2+) ion per subunit.</text>
</comment>
<comment type="pathway">
    <text>Metabolic intermediate biosynthesis; 2-deoxystreptamine biosynthesis; 2-deoxystreptamine from D-glucose 6-phosphate: step 1/4.</text>
</comment>
<comment type="pathway">
    <text>Antibiotic biosynthesis; lividomycin biosynthesis.</text>
</comment>
<comment type="similarity">
    <text evidence="3">Belongs to the sugar phosphate cyclases superfamily. DOI synthase family.</text>
</comment>
<accession>Q2MF70</accession>
<gene>
    <name type="primary">livC</name>
</gene>
<sequence>MHVTAITMEDANFPYRLGTDCAEELVARLGVRAASRYLVVCDTTVAALYGHDLVARLEKDAGPAVLLTHQVGEVHKDVTTVGALAEQALGAGADRRSVVVALGGGITGNIAGLLAALLFRGITLVHVPTTVVAMLDSVLSLKQAVNASFGKNLVGTFYQPAEVLADTAMLRTLPEREVRSGMGEVVKNALAVRPAMADRLAGLLRPDARYDDDALRWIIAESVAAKADVTGADKHERGDGLVLEYGHTAGHAIEHAARGAVAHGAGVAVGMVIAAEVSHRLGHASASFVARHRELISKAGLEDTVPACVRTDDVKNWLTYDNKRGYLDCAADTTPMVLLAGPGRPLRTGGMPLVPVPLAVLNETVDALAAPGRAGTDHRTAVPV</sequence>
<reference key="1">
    <citation type="submission" date="2004-06" db="EMBL/GenBank/DDBJ databases">
        <title>Analysis and comparison of biosynthetic gene clusters for the 2-deoxy-inosamine containing aminoglycoside antibiotics ribostamycin, neomycin, lividomycin, paromomycin and butirosin.</title>
        <authorList>
            <person name="Aboshanab K.M.A."/>
            <person name="Schmidt-Beissner H."/>
            <person name="Wehmeier U.F."/>
            <person name="Piepersberg W."/>
            <person name="Welzel K."/>
            <person name="Vente A."/>
        </authorList>
    </citation>
    <scope>NUCLEOTIDE SEQUENCE [GENOMIC DNA]</scope>
    <source>
        <strain>CBS 844.73</strain>
    </source>
</reference>
<organism>
    <name type="scientific">Streptomyces lividus</name>
    <dbReference type="NCBI Taxonomy" id="282216"/>
    <lineage>
        <taxon>Bacteria</taxon>
        <taxon>Bacillati</taxon>
        <taxon>Actinomycetota</taxon>
        <taxon>Actinomycetes</taxon>
        <taxon>Kitasatosporales</taxon>
        <taxon>Streptomycetaceae</taxon>
        <taxon>Streptomyces</taxon>
    </lineage>
</organism>
<name>DOIS_STRLV</name>
<evidence type="ECO:0000250" key="1"/>
<evidence type="ECO:0000250" key="2">
    <source>
        <dbReference type="UniProtKB" id="Q9S5E2"/>
    </source>
</evidence>
<evidence type="ECO:0000305" key="3"/>
<proteinExistence type="inferred from homology"/>